<gene>
    <name evidence="1" type="primary">thyA</name>
    <name type="ordered locus">AHA_0675</name>
</gene>
<reference key="1">
    <citation type="journal article" date="2006" name="J. Bacteriol.">
        <title>Genome sequence of Aeromonas hydrophila ATCC 7966T: jack of all trades.</title>
        <authorList>
            <person name="Seshadri R."/>
            <person name="Joseph S.W."/>
            <person name="Chopra A.K."/>
            <person name="Sha J."/>
            <person name="Shaw J."/>
            <person name="Graf J."/>
            <person name="Haft D.H."/>
            <person name="Wu M."/>
            <person name="Ren Q."/>
            <person name="Rosovitz M.J."/>
            <person name="Madupu R."/>
            <person name="Tallon L."/>
            <person name="Kim M."/>
            <person name="Jin S."/>
            <person name="Vuong H."/>
            <person name="Stine O.C."/>
            <person name="Ali A."/>
            <person name="Horneman A.J."/>
            <person name="Heidelberg J.F."/>
        </authorList>
    </citation>
    <scope>NUCLEOTIDE SEQUENCE [LARGE SCALE GENOMIC DNA]</scope>
    <source>
        <strain>ATCC 7966 / DSM 30187 / BCRC 13018 / CCUG 14551 / JCM 1027 / KCTC 2358 / NCIMB 9240 / NCTC 8049</strain>
    </source>
</reference>
<feature type="chain" id="PRO_1000000569" description="Thymidylate synthase">
    <location>
        <begin position="1"/>
        <end position="264"/>
    </location>
</feature>
<feature type="active site" description="Nucleophile" evidence="1">
    <location>
        <position position="146"/>
    </location>
</feature>
<feature type="binding site" description="in other chain" evidence="1">
    <location>
        <position position="21"/>
    </location>
    <ligand>
        <name>dUMP</name>
        <dbReference type="ChEBI" id="CHEBI:246422"/>
        <note>ligand shared between dimeric partners</note>
    </ligand>
</feature>
<feature type="binding site" evidence="1">
    <location>
        <position position="51"/>
    </location>
    <ligand>
        <name>(6R)-5,10-methylene-5,6,7,8-tetrahydrofolate</name>
        <dbReference type="ChEBI" id="CHEBI:15636"/>
    </ligand>
</feature>
<feature type="binding site" evidence="1">
    <location>
        <begin position="126"/>
        <end position="127"/>
    </location>
    <ligand>
        <name>dUMP</name>
        <dbReference type="ChEBI" id="CHEBI:246422"/>
        <note>ligand shared between dimeric partners</note>
    </ligand>
</feature>
<feature type="binding site" description="in other chain" evidence="1">
    <location>
        <begin position="166"/>
        <end position="169"/>
    </location>
    <ligand>
        <name>dUMP</name>
        <dbReference type="ChEBI" id="CHEBI:246422"/>
        <note>ligand shared between dimeric partners</note>
    </ligand>
</feature>
<feature type="binding site" evidence="1">
    <location>
        <position position="169"/>
    </location>
    <ligand>
        <name>(6R)-5,10-methylene-5,6,7,8-tetrahydrofolate</name>
        <dbReference type="ChEBI" id="CHEBI:15636"/>
    </ligand>
</feature>
<feature type="binding site" description="in other chain" evidence="1">
    <location>
        <position position="177"/>
    </location>
    <ligand>
        <name>dUMP</name>
        <dbReference type="ChEBI" id="CHEBI:246422"/>
        <note>ligand shared between dimeric partners</note>
    </ligand>
</feature>
<feature type="binding site" description="in other chain" evidence="1">
    <location>
        <begin position="207"/>
        <end position="209"/>
    </location>
    <ligand>
        <name>dUMP</name>
        <dbReference type="ChEBI" id="CHEBI:246422"/>
        <note>ligand shared between dimeric partners</note>
    </ligand>
</feature>
<feature type="binding site" evidence="1">
    <location>
        <position position="263"/>
    </location>
    <ligand>
        <name>(6R)-5,10-methylene-5,6,7,8-tetrahydrofolate</name>
        <dbReference type="ChEBI" id="CHEBI:15636"/>
    </ligand>
</feature>
<keyword id="KW-0963">Cytoplasm</keyword>
<keyword id="KW-0489">Methyltransferase</keyword>
<keyword id="KW-0545">Nucleotide biosynthesis</keyword>
<keyword id="KW-1185">Reference proteome</keyword>
<keyword id="KW-0808">Transferase</keyword>
<protein>
    <recommendedName>
        <fullName evidence="1">Thymidylate synthase</fullName>
        <shortName evidence="1">TS</shortName>
        <shortName evidence="1">TSase</shortName>
        <ecNumber evidence="1">2.1.1.45</ecNumber>
    </recommendedName>
</protein>
<dbReference type="EC" id="2.1.1.45" evidence="1"/>
<dbReference type="EMBL" id="CP000462">
    <property type="protein sequence ID" value="ABK37330.1"/>
    <property type="molecule type" value="Genomic_DNA"/>
</dbReference>
<dbReference type="RefSeq" id="WP_011704637.1">
    <property type="nucleotide sequence ID" value="NC_008570.1"/>
</dbReference>
<dbReference type="RefSeq" id="YP_855217.1">
    <property type="nucleotide sequence ID" value="NC_008570.1"/>
</dbReference>
<dbReference type="SMR" id="A0KG32"/>
<dbReference type="STRING" id="380703.AHA_0675"/>
<dbReference type="EnsemblBacteria" id="ABK37330">
    <property type="protein sequence ID" value="ABK37330"/>
    <property type="gene ID" value="AHA_0675"/>
</dbReference>
<dbReference type="GeneID" id="4490682"/>
<dbReference type="KEGG" id="aha:AHA_0675"/>
<dbReference type="PATRIC" id="fig|380703.7.peg.676"/>
<dbReference type="eggNOG" id="COG0207">
    <property type="taxonomic scope" value="Bacteria"/>
</dbReference>
<dbReference type="HOGENOM" id="CLU_021669_0_0_6"/>
<dbReference type="OrthoDB" id="9774633at2"/>
<dbReference type="UniPathway" id="UPA00575"/>
<dbReference type="Proteomes" id="UP000000756">
    <property type="component" value="Chromosome"/>
</dbReference>
<dbReference type="GO" id="GO:0005829">
    <property type="term" value="C:cytosol"/>
    <property type="evidence" value="ECO:0007669"/>
    <property type="project" value="TreeGrafter"/>
</dbReference>
<dbReference type="GO" id="GO:0004799">
    <property type="term" value="F:thymidylate synthase activity"/>
    <property type="evidence" value="ECO:0007669"/>
    <property type="project" value="UniProtKB-UniRule"/>
</dbReference>
<dbReference type="GO" id="GO:0006231">
    <property type="term" value="P:dTMP biosynthetic process"/>
    <property type="evidence" value="ECO:0007669"/>
    <property type="project" value="UniProtKB-UniRule"/>
</dbReference>
<dbReference type="GO" id="GO:0006235">
    <property type="term" value="P:dTTP biosynthetic process"/>
    <property type="evidence" value="ECO:0007669"/>
    <property type="project" value="UniProtKB-UniRule"/>
</dbReference>
<dbReference type="GO" id="GO:0032259">
    <property type="term" value="P:methylation"/>
    <property type="evidence" value="ECO:0007669"/>
    <property type="project" value="UniProtKB-KW"/>
</dbReference>
<dbReference type="CDD" id="cd00351">
    <property type="entry name" value="TS_Pyrimidine_HMase"/>
    <property type="match status" value="1"/>
</dbReference>
<dbReference type="FunFam" id="3.30.572.10:FF:000001">
    <property type="entry name" value="Thymidylate synthase"/>
    <property type="match status" value="1"/>
</dbReference>
<dbReference type="Gene3D" id="3.30.572.10">
    <property type="entry name" value="Thymidylate synthase/dCMP hydroxymethylase domain"/>
    <property type="match status" value="1"/>
</dbReference>
<dbReference type="HAMAP" id="MF_00008">
    <property type="entry name" value="Thymidy_synth_bact"/>
    <property type="match status" value="1"/>
</dbReference>
<dbReference type="InterPro" id="IPR045097">
    <property type="entry name" value="Thymidate_synth/dCMP_Mease"/>
</dbReference>
<dbReference type="InterPro" id="IPR023451">
    <property type="entry name" value="Thymidate_synth/dCMP_Mease_dom"/>
</dbReference>
<dbReference type="InterPro" id="IPR036926">
    <property type="entry name" value="Thymidate_synth/dCMP_Mease_sf"/>
</dbReference>
<dbReference type="InterPro" id="IPR000398">
    <property type="entry name" value="Thymidylate_synthase"/>
</dbReference>
<dbReference type="InterPro" id="IPR020940">
    <property type="entry name" value="Thymidylate_synthase_AS"/>
</dbReference>
<dbReference type="NCBIfam" id="NF002497">
    <property type="entry name" value="PRK01827.1-3"/>
    <property type="match status" value="1"/>
</dbReference>
<dbReference type="NCBIfam" id="NF002499">
    <property type="entry name" value="PRK01827.1-5"/>
    <property type="match status" value="1"/>
</dbReference>
<dbReference type="NCBIfam" id="TIGR03284">
    <property type="entry name" value="thym_sym"/>
    <property type="match status" value="2"/>
</dbReference>
<dbReference type="PANTHER" id="PTHR11548:SF9">
    <property type="entry name" value="THYMIDYLATE SYNTHASE"/>
    <property type="match status" value="1"/>
</dbReference>
<dbReference type="PANTHER" id="PTHR11548">
    <property type="entry name" value="THYMIDYLATE SYNTHASE 1"/>
    <property type="match status" value="1"/>
</dbReference>
<dbReference type="Pfam" id="PF00303">
    <property type="entry name" value="Thymidylat_synt"/>
    <property type="match status" value="1"/>
</dbReference>
<dbReference type="PRINTS" id="PR00108">
    <property type="entry name" value="THYMDSNTHASE"/>
</dbReference>
<dbReference type="SUPFAM" id="SSF55831">
    <property type="entry name" value="Thymidylate synthase/dCMP hydroxymethylase"/>
    <property type="match status" value="1"/>
</dbReference>
<dbReference type="PROSITE" id="PS00091">
    <property type="entry name" value="THYMIDYLATE_SYNTHASE"/>
    <property type="match status" value="1"/>
</dbReference>
<name>TYSY_AERHH</name>
<comment type="function">
    <text evidence="1">Catalyzes the reductive methylation of 2'-deoxyuridine-5'-monophosphate (dUMP) to 2'-deoxythymidine-5'-monophosphate (dTMP) while utilizing 5,10-methylenetetrahydrofolate (mTHF) as the methyl donor and reductant in the reaction, yielding dihydrofolate (DHF) as a by-product. This enzymatic reaction provides an intracellular de novo source of dTMP, an essential precursor for DNA biosynthesis.</text>
</comment>
<comment type="catalytic activity">
    <reaction evidence="1">
        <text>dUMP + (6R)-5,10-methylene-5,6,7,8-tetrahydrofolate = 7,8-dihydrofolate + dTMP</text>
        <dbReference type="Rhea" id="RHEA:12104"/>
        <dbReference type="ChEBI" id="CHEBI:15636"/>
        <dbReference type="ChEBI" id="CHEBI:57451"/>
        <dbReference type="ChEBI" id="CHEBI:63528"/>
        <dbReference type="ChEBI" id="CHEBI:246422"/>
        <dbReference type="EC" id="2.1.1.45"/>
    </reaction>
</comment>
<comment type="pathway">
    <text evidence="1">Pyrimidine metabolism; dTTP biosynthesis.</text>
</comment>
<comment type="subunit">
    <text evidence="1">Homodimer.</text>
</comment>
<comment type="subcellular location">
    <subcellularLocation>
        <location evidence="1">Cytoplasm</location>
    </subcellularLocation>
</comment>
<comment type="similarity">
    <text evidence="1">Belongs to the thymidylate synthase family. Bacterial-type ThyA subfamily.</text>
</comment>
<sequence>MRAYLDLMQKILDEGTVKSDRTGTGTISLFGHQMRFNLAEGFPLVTTKKCHLRSIIHELLWFLNGDTNTAYLKEHGVSIWDEWADENGDLGPVYGAQWRSWPAADGSVIDQIQKAVDDIKHNPDSRRIIVSAWNVGELDKMALAPCHAFFQFYVADGKLSCQLYQRSCDVFLGLPFNIASYALLTHMMAQQCDLEVGDFVWTGGDVHLYSNHMEQTALQLTREPRPLPTLVIKRKPDSIFDYKFEDFEIEGYDPHPGIKAPVAI</sequence>
<evidence type="ECO:0000255" key="1">
    <source>
        <dbReference type="HAMAP-Rule" id="MF_00008"/>
    </source>
</evidence>
<organism>
    <name type="scientific">Aeromonas hydrophila subsp. hydrophila (strain ATCC 7966 / DSM 30187 / BCRC 13018 / CCUG 14551 / JCM 1027 / KCTC 2358 / NCIMB 9240 / NCTC 8049)</name>
    <dbReference type="NCBI Taxonomy" id="380703"/>
    <lineage>
        <taxon>Bacteria</taxon>
        <taxon>Pseudomonadati</taxon>
        <taxon>Pseudomonadota</taxon>
        <taxon>Gammaproteobacteria</taxon>
        <taxon>Aeromonadales</taxon>
        <taxon>Aeromonadaceae</taxon>
        <taxon>Aeromonas</taxon>
    </lineage>
</organism>
<accession>A0KG32</accession>
<proteinExistence type="inferred from homology"/>